<dbReference type="EMBL" id="BC147997">
    <property type="protein sequence ID" value="AAI47998.1"/>
    <property type="molecule type" value="mRNA"/>
</dbReference>
<dbReference type="RefSeq" id="NP_001098461.1">
    <property type="nucleotide sequence ID" value="NM_001104991.2"/>
</dbReference>
<dbReference type="SMR" id="A6QLK5"/>
<dbReference type="FunCoup" id="A6QLK5">
    <property type="interactions" value="1133"/>
</dbReference>
<dbReference type="STRING" id="9913.ENSBTAP00000012212"/>
<dbReference type="PaxDb" id="9913-ENSBTAP00000012212"/>
<dbReference type="Ensembl" id="ENSBTAT00000012212.7">
    <property type="protein sequence ID" value="ENSBTAP00000012212.5"/>
    <property type="gene ID" value="ENSBTAG00000009271.7"/>
</dbReference>
<dbReference type="GeneID" id="538718"/>
<dbReference type="KEGG" id="bta:538718"/>
<dbReference type="CTD" id="9240"/>
<dbReference type="VEuPathDB" id="HostDB:ENSBTAG00000009271"/>
<dbReference type="VGNC" id="VGNC:55133">
    <property type="gene designation" value="PNMA1"/>
</dbReference>
<dbReference type="eggNOG" id="ENOG502SPHT">
    <property type="taxonomic scope" value="Eukaryota"/>
</dbReference>
<dbReference type="GeneTree" id="ENSGT01030000234522"/>
<dbReference type="HOGENOM" id="CLU_014694_0_0_1"/>
<dbReference type="InParanoid" id="A6QLK5"/>
<dbReference type="OMA" id="EHTNEVM"/>
<dbReference type="OrthoDB" id="115435at2759"/>
<dbReference type="TreeFam" id="TF335054"/>
<dbReference type="Proteomes" id="UP000009136">
    <property type="component" value="Chromosome 10"/>
</dbReference>
<dbReference type="Bgee" id="ENSBTAG00000009271">
    <property type="expression patterns" value="Expressed in retina and 105 other cell types or tissues"/>
</dbReference>
<dbReference type="GO" id="GO:0005737">
    <property type="term" value="C:cytoplasm"/>
    <property type="evidence" value="ECO:0000250"/>
    <property type="project" value="UniProtKB"/>
</dbReference>
<dbReference type="GO" id="GO:0005730">
    <property type="term" value="C:nucleolus"/>
    <property type="evidence" value="ECO:0000250"/>
    <property type="project" value="UniProtKB"/>
</dbReference>
<dbReference type="GO" id="GO:0002437">
    <property type="term" value="P:inflammatory response to antigenic stimulus"/>
    <property type="evidence" value="ECO:0000250"/>
    <property type="project" value="UniProtKB"/>
</dbReference>
<dbReference type="InterPro" id="IPR026523">
    <property type="entry name" value="PNMA"/>
</dbReference>
<dbReference type="InterPro" id="IPR048270">
    <property type="entry name" value="PNMA_C"/>
</dbReference>
<dbReference type="InterPro" id="IPR048271">
    <property type="entry name" value="PNMA_N"/>
</dbReference>
<dbReference type="PANTHER" id="PTHR23095">
    <property type="entry name" value="PARANEOPLASTIC ANTIGEN"/>
    <property type="match status" value="1"/>
</dbReference>
<dbReference type="PANTHER" id="PTHR23095:SF17">
    <property type="entry name" value="PARANEOPLASTIC ANTIGEN MA1"/>
    <property type="match status" value="1"/>
</dbReference>
<dbReference type="Pfam" id="PF14893">
    <property type="entry name" value="PNMA"/>
    <property type="match status" value="1"/>
</dbReference>
<dbReference type="Pfam" id="PF20846">
    <property type="entry name" value="PNMA_N"/>
    <property type="match status" value="1"/>
</dbReference>
<comment type="subcellular location">
    <subcellularLocation>
        <location evidence="1">Nucleus</location>
        <location evidence="1">Nucleolus</location>
    </subcellularLocation>
</comment>
<comment type="similarity">
    <text evidence="2">Belongs to the PNMA family.</text>
</comment>
<gene>
    <name type="primary">PNMA1</name>
</gene>
<keyword id="KW-0539">Nucleus</keyword>
<keyword id="KW-1185">Reference proteome</keyword>
<reference key="1">
    <citation type="submission" date="2007-06" db="EMBL/GenBank/DDBJ databases">
        <authorList>
            <consortium name="NIH - Mammalian Gene Collection (MGC) project"/>
        </authorList>
    </citation>
    <scope>NUCLEOTIDE SEQUENCE [LARGE SCALE MRNA]</scope>
    <source>
        <strain>Hereford</strain>
        <tissue>Basal ganglia</tissue>
    </source>
</reference>
<sequence length="353" mass="39694">MAMTLLEDWCRGMDVNSQRALLVWGIPVNCDEAEIEETLQAAMPQVHYRVLGRMFWREENAKAALLELTGTVDYAAIPREMPGKGGVWKVVFKPPTSDAEFLERLHLFLAREGWTVQDVARVLGFENSSPAPGPDMPAEMLNYILDNVIKPLIESIWYKKLTLFSGRDIPGPGEETFEPWLEHANEVIEEWQVSDIEKRRRLMESLRGPAADVIRILKTNNPDITTAECLKALEQVFGSVESSRDVQVRFLNTYQNPGEKLSAYVIRLEPLLQKVVEKGAIDKENVNQARLEQVIAGANHSGAIRRQLWLTGAAEGPAPNLFQLLVQIREEEAKEEEAAAEAALLQLGLEGHF</sequence>
<evidence type="ECO:0000250" key="1"/>
<evidence type="ECO:0000305" key="2"/>
<protein>
    <recommendedName>
        <fullName>Paraneoplastic antigen Ma1 homolog</fullName>
    </recommendedName>
</protein>
<organism>
    <name type="scientific">Bos taurus</name>
    <name type="common">Bovine</name>
    <dbReference type="NCBI Taxonomy" id="9913"/>
    <lineage>
        <taxon>Eukaryota</taxon>
        <taxon>Metazoa</taxon>
        <taxon>Chordata</taxon>
        <taxon>Craniata</taxon>
        <taxon>Vertebrata</taxon>
        <taxon>Euteleostomi</taxon>
        <taxon>Mammalia</taxon>
        <taxon>Eutheria</taxon>
        <taxon>Laurasiatheria</taxon>
        <taxon>Artiodactyla</taxon>
        <taxon>Ruminantia</taxon>
        <taxon>Pecora</taxon>
        <taxon>Bovidae</taxon>
        <taxon>Bovinae</taxon>
        <taxon>Bos</taxon>
    </lineage>
</organism>
<name>PNMA1_BOVIN</name>
<feature type="chain" id="PRO_0000311221" description="Paraneoplastic antigen Ma1 homolog">
    <location>
        <begin position="1"/>
        <end position="353"/>
    </location>
</feature>
<accession>A6QLK5</accession>
<proteinExistence type="evidence at transcript level"/>